<keyword id="KW-0007">Acetylation</keyword>
<keyword id="KW-0028">Amino-acid biosynthesis</keyword>
<keyword id="KW-0067">ATP-binding</keyword>
<keyword id="KW-0963">Cytoplasm</keyword>
<keyword id="KW-0368">Histidine biosynthesis</keyword>
<keyword id="KW-0378">Hydrolase</keyword>
<keyword id="KW-0436">Ligase</keyword>
<keyword id="KW-0486">Methionine biosynthesis</keyword>
<keyword id="KW-0511">Multifunctional enzyme</keyword>
<keyword id="KW-0521">NADP</keyword>
<keyword id="KW-0547">Nucleotide-binding</keyword>
<keyword id="KW-0554">One-carbon metabolism</keyword>
<keyword id="KW-0560">Oxidoreductase</keyword>
<keyword id="KW-0597">Phosphoprotein</keyword>
<keyword id="KW-0658">Purine biosynthesis</keyword>
<keyword id="KW-1185">Reference proteome</keyword>
<name>C1TC_PONAB</name>
<organism>
    <name type="scientific">Pongo abelii</name>
    <name type="common">Sumatran orangutan</name>
    <name type="synonym">Pongo pygmaeus abelii</name>
    <dbReference type="NCBI Taxonomy" id="9601"/>
    <lineage>
        <taxon>Eukaryota</taxon>
        <taxon>Metazoa</taxon>
        <taxon>Chordata</taxon>
        <taxon>Craniata</taxon>
        <taxon>Vertebrata</taxon>
        <taxon>Euteleostomi</taxon>
        <taxon>Mammalia</taxon>
        <taxon>Eutheria</taxon>
        <taxon>Euarchontoglires</taxon>
        <taxon>Primates</taxon>
        <taxon>Haplorrhini</taxon>
        <taxon>Catarrhini</taxon>
        <taxon>Hominidae</taxon>
        <taxon>Pongo</taxon>
    </lineage>
</organism>
<proteinExistence type="evidence at transcript level"/>
<sequence length="935" mass="101341">MAPAEILNGREISAQIRARLKNQVTQLKEQVPGFTPGLAILLVGNRDDSNLYINVKLKAAEEIGIKATHIKLPRTTTESEVIKYITSLNEDSTVHGFLVQLPLDSENSINTEEVINAIAPEKDVDGLTSISAGKLARGDLNDCFIPCTPKGCLELIKETGVPIAGRHAVVVGRSKIVGAPMHDLLLWNNATVTTCHSKTANLDEEVNKGDILVVATGRPEMVKGEWIKPGAIVIDCGINYVPDDKKPNGRKVVGDVAYDEAKERASFITPVPGGVGPMTVAMLMQSTVESAKRFLEKFKPGKWMIQYNNLNLKTPDPSDIDISRSCKPKPIGKLAREIGLLSEEVELYGETKAKVLLSALERLKHRPDGKYVVVTGITPTPLGEGKSTTTVGLVQALGAHLYQNVFACVRQPSQGPTFGIKGGAAGGGYSQVIPMEEFNLHLTGDIHAFTAANNLVAAAIDARIFHELTQTDKALFNRLVPSVNGVRKFSDIQIRRLKRLGIEKTDPTTLTDEEINRFARLDIDPETITWQRVLDTNDRFLRKITIGQAPTEKGHTRTAQFDISVASEIMAALALTTSLEDMRERLGKMVVASSKKGEPVSAEDLGVSGALTVLMKDAIKPNLMQTLEGTPVFVHAGPFANIAHGNSSIIADRIALKLVGPEGFVVTEAGFGADIGMEKFFNIKCRYSGLCPHVVVLVATVRALKMHGGGPTVTAGLPLPKAYIEENLELVEKGFSNLKKQIENARMFGIPVVVAVNAFKTDTEAELDLISRLSREHGAFDAVKCTHWAEGGNGALALAQAVQRAAQAPSSFQLLYDLKLPVEDKIRIIAQKIYGADDIELLPEAQHKAEVYTKQGFGNLPVCMAKTHLSLSHNPEQKGVPTGFILPIRDIRASVGAGFLYPLVGTMSTMPGLPTRPCFYDIDLDPETQQVNGLF</sequence>
<protein>
    <recommendedName>
        <fullName evidence="2">C-1-tetrahydrofolate synthase, cytoplasmic</fullName>
        <shortName>C1-THF synthase</shortName>
    </recommendedName>
    <domain>
        <recommendedName>
            <fullName evidence="2">Methylenetetrahydrofolate dehydrogenase</fullName>
            <ecNumber evidence="2">1.5.1.5</ecNumber>
        </recommendedName>
    </domain>
    <domain>
        <recommendedName>
            <fullName evidence="2">Methenyltetrahydrofolate cyclohydrolase</fullName>
            <ecNumber evidence="2">3.5.4.9</ecNumber>
        </recommendedName>
    </domain>
    <domain>
        <recommendedName>
            <fullName evidence="2">Formyltetrahydrofolate synthetase</fullName>
            <ecNumber evidence="2">6.3.4.3</ecNumber>
        </recommendedName>
    </domain>
</protein>
<feature type="chain" id="PRO_0000265955" description="C-1-tetrahydrofolate synthase, cytoplasmic">
    <location>
        <begin position="1"/>
        <end position="935"/>
    </location>
</feature>
<feature type="region of interest" description="Methylenetetrahydrofolate dehydrogenase and methenyltetrahydrofolate cyclohydrolase (D/C) domain" evidence="2">
    <location>
        <begin position="2"/>
        <end position="291"/>
    </location>
</feature>
<feature type="region of interest" description="Formyltetrahydrofolate synthetase domain" evidence="2">
    <location>
        <begin position="310"/>
        <end position="935"/>
    </location>
</feature>
<feature type="active site" evidence="2">
    <location>
        <position position="56"/>
    </location>
</feature>
<feature type="binding site" evidence="2">
    <location>
        <begin position="52"/>
        <end position="56"/>
    </location>
    <ligand>
        <name>substrate</name>
    </ligand>
</feature>
<feature type="binding site" evidence="2">
    <location>
        <begin position="99"/>
        <end position="101"/>
    </location>
    <ligand>
        <name>substrate</name>
    </ligand>
</feature>
<feature type="binding site" evidence="2">
    <location>
        <begin position="172"/>
        <end position="174"/>
    </location>
    <ligand>
        <name>NADP(+)</name>
        <dbReference type="ChEBI" id="CHEBI:58349"/>
    </ligand>
</feature>
<feature type="binding site" evidence="2">
    <location>
        <position position="197"/>
    </location>
    <ligand>
        <name>NADP(+)</name>
        <dbReference type="ChEBI" id="CHEBI:58349"/>
    </ligand>
</feature>
<feature type="binding site" evidence="2">
    <location>
        <begin position="272"/>
        <end position="276"/>
    </location>
    <ligand>
        <name>substrate</name>
    </ligand>
</feature>
<feature type="binding site" evidence="1">
    <location>
        <begin position="380"/>
        <end position="387"/>
    </location>
    <ligand>
        <name>ATP</name>
        <dbReference type="ChEBI" id="CHEBI:30616"/>
    </ligand>
</feature>
<feature type="modified residue" description="N-acetylmethionine" evidence="2">
    <location>
        <position position="1"/>
    </location>
</feature>
<feature type="modified residue" description="Phosphoserine" evidence="2">
    <location>
        <position position="318"/>
    </location>
</feature>
<feature type="modified residue" description="Phosphoserine" evidence="2">
    <location>
        <position position="413"/>
    </location>
</feature>
<feature type="modified residue" description="Phosphoserine" evidence="2">
    <location>
        <position position="490"/>
    </location>
</feature>
<dbReference type="EC" id="1.5.1.5" evidence="2"/>
<dbReference type="EC" id="3.5.4.9" evidence="2"/>
<dbReference type="EC" id="6.3.4.3" evidence="2"/>
<dbReference type="EMBL" id="CR859711">
    <property type="protein sequence ID" value="CAH91870.1"/>
    <property type="molecule type" value="mRNA"/>
</dbReference>
<dbReference type="RefSeq" id="NP_001126083.1">
    <property type="nucleotide sequence ID" value="NM_001132611.1"/>
</dbReference>
<dbReference type="SMR" id="Q5R8P0"/>
<dbReference type="FunCoup" id="Q5R8P0">
    <property type="interactions" value="1991"/>
</dbReference>
<dbReference type="STRING" id="9601.ENSPPYP00000006705"/>
<dbReference type="GeneID" id="100173036"/>
<dbReference type="KEGG" id="pon:100173036"/>
<dbReference type="CTD" id="4522"/>
<dbReference type="eggNOG" id="KOG4230">
    <property type="taxonomic scope" value="Eukaryota"/>
</dbReference>
<dbReference type="InParanoid" id="Q5R8P0"/>
<dbReference type="OrthoDB" id="1845775at2759"/>
<dbReference type="UniPathway" id="UPA00193"/>
<dbReference type="Proteomes" id="UP000001595">
    <property type="component" value="Unplaced"/>
</dbReference>
<dbReference type="GO" id="GO:0005829">
    <property type="term" value="C:cytosol"/>
    <property type="evidence" value="ECO:0007669"/>
    <property type="project" value="TreeGrafter"/>
</dbReference>
<dbReference type="GO" id="GO:0005524">
    <property type="term" value="F:ATP binding"/>
    <property type="evidence" value="ECO:0007669"/>
    <property type="project" value="UniProtKB-KW"/>
</dbReference>
<dbReference type="GO" id="GO:0004329">
    <property type="term" value="F:formate-tetrahydrofolate ligase activity"/>
    <property type="evidence" value="ECO:0000250"/>
    <property type="project" value="UniProtKB"/>
</dbReference>
<dbReference type="GO" id="GO:0004477">
    <property type="term" value="F:methenyltetrahydrofolate cyclohydrolase activity"/>
    <property type="evidence" value="ECO:0000250"/>
    <property type="project" value="UniProtKB"/>
</dbReference>
<dbReference type="GO" id="GO:0004488">
    <property type="term" value="F:methylenetetrahydrofolate dehydrogenase (NADP+) activity"/>
    <property type="evidence" value="ECO:0000250"/>
    <property type="project" value="UniProtKB"/>
</dbReference>
<dbReference type="GO" id="GO:0000105">
    <property type="term" value="P:L-histidine biosynthetic process"/>
    <property type="evidence" value="ECO:0007669"/>
    <property type="project" value="UniProtKB-KW"/>
</dbReference>
<dbReference type="GO" id="GO:0009086">
    <property type="term" value="P:methionine biosynthetic process"/>
    <property type="evidence" value="ECO:0007669"/>
    <property type="project" value="UniProtKB-KW"/>
</dbReference>
<dbReference type="GO" id="GO:0006164">
    <property type="term" value="P:purine nucleotide biosynthetic process"/>
    <property type="evidence" value="ECO:0000250"/>
    <property type="project" value="UniProtKB"/>
</dbReference>
<dbReference type="GO" id="GO:0035999">
    <property type="term" value="P:tetrahydrofolate interconversion"/>
    <property type="evidence" value="ECO:0000250"/>
    <property type="project" value="UniProtKB"/>
</dbReference>
<dbReference type="CDD" id="cd00477">
    <property type="entry name" value="FTHFS"/>
    <property type="match status" value="1"/>
</dbReference>
<dbReference type="CDD" id="cd01080">
    <property type="entry name" value="NAD_bind_m-THF_DH_Cyclohyd"/>
    <property type="match status" value="1"/>
</dbReference>
<dbReference type="FunFam" id="3.40.50.720:FF:000006">
    <property type="entry name" value="Bifunctional protein FolD"/>
    <property type="match status" value="1"/>
</dbReference>
<dbReference type="FunFam" id="3.40.50.300:FF:000245">
    <property type="entry name" value="C-1-tetrahydrofolate synthase, cytoplasmic"/>
    <property type="match status" value="1"/>
</dbReference>
<dbReference type="FunFam" id="3.40.50.300:FF:001123">
    <property type="entry name" value="C-1-tetrahydrofolate synthase, cytoplasmic isoform X2"/>
    <property type="match status" value="1"/>
</dbReference>
<dbReference type="FunFam" id="3.40.50.10860:FF:000005">
    <property type="entry name" value="C-1-tetrahydrofolate synthase, cytoplasmic, putative"/>
    <property type="match status" value="1"/>
</dbReference>
<dbReference type="FunFam" id="1.10.8.770:FF:000001">
    <property type="entry name" value="Methylenetetrahydrofolate dehydrogenase (NADP+ dependent) 1 like"/>
    <property type="match status" value="1"/>
</dbReference>
<dbReference type="FunFam" id="3.10.410.10:FF:000001">
    <property type="entry name" value="Putative formate--tetrahydrofolate ligase"/>
    <property type="match status" value="1"/>
</dbReference>
<dbReference type="Gene3D" id="1.10.8.770">
    <property type="match status" value="1"/>
</dbReference>
<dbReference type="Gene3D" id="3.10.410.10">
    <property type="entry name" value="Formyltetrahydrofolate synthetase, domain 3"/>
    <property type="match status" value="1"/>
</dbReference>
<dbReference type="Gene3D" id="3.40.50.10860">
    <property type="entry name" value="Leucine Dehydrogenase, chain A, domain 1"/>
    <property type="match status" value="1"/>
</dbReference>
<dbReference type="Gene3D" id="3.40.50.720">
    <property type="entry name" value="NAD(P)-binding Rossmann-like Domain"/>
    <property type="match status" value="1"/>
</dbReference>
<dbReference type="Gene3D" id="3.40.50.300">
    <property type="entry name" value="P-loop containing nucleotide triphosphate hydrolases"/>
    <property type="match status" value="2"/>
</dbReference>
<dbReference type="HAMAP" id="MF_01543">
    <property type="entry name" value="FTHFS"/>
    <property type="match status" value="1"/>
</dbReference>
<dbReference type="HAMAP" id="MF_01576">
    <property type="entry name" value="THF_DHG_CYH"/>
    <property type="match status" value="1"/>
</dbReference>
<dbReference type="InterPro" id="IPR046346">
    <property type="entry name" value="Aminoacid_DH-like_N_sf"/>
</dbReference>
<dbReference type="InterPro" id="IPR000559">
    <property type="entry name" value="Formate_THF_ligase"/>
</dbReference>
<dbReference type="InterPro" id="IPR020628">
    <property type="entry name" value="Formate_THF_ligase_CS"/>
</dbReference>
<dbReference type="InterPro" id="IPR036291">
    <property type="entry name" value="NAD(P)-bd_dom_sf"/>
</dbReference>
<dbReference type="InterPro" id="IPR027417">
    <property type="entry name" value="P-loop_NTPase"/>
</dbReference>
<dbReference type="InterPro" id="IPR000672">
    <property type="entry name" value="THF_DH/CycHdrlase"/>
</dbReference>
<dbReference type="InterPro" id="IPR020630">
    <property type="entry name" value="THF_DH/CycHdrlase_cat_dom"/>
</dbReference>
<dbReference type="InterPro" id="IPR020867">
    <property type="entry name" value="THF_DH/CycHdrlase_CS"/>
</dbReference>
<dbReference type="InterPro" id="IPR020631">
    <property type="entry name" value="THF_DH/CycHdrlase_NAD-bd_dom"/>
</dbReference>
<dbReference type="PANTHER" id="PTHR48099:SF1">
    <property type="entry name" value="C-1-TETRAHYDROFOLATE SYNTHASE, CYTOPLASMIC"/>
    <property type="match status" value="1"/>
</dbReference>
<dbReference type="PANTHER" id="PTHR48099">
    <property type="entry name" value="C-1-TETRAHYDROFOLATE SYNTHASE, CYTOPLASMIC-RELATED"/>
    <property type="match status" value="1"/>
</dbReference>
<dbReference type="Pfam" id="PF01268">
    <property type="entry name" value="FTHFS"/>
    <property type="match status" value="1"/>
</dbReference>
<dbReference type="Pfam" id="PF00763">
    <property type="entry name" value="THF_DHG_CYH"/>
    <property type="match status" value="1"/>
</dbReference>
<dbReference type="Pfam" id="PF02882">
    <property type="entry name" value="THF_DHG_CYH_C"/>
    <property type="match status" value="1"/>
</dbReference>
<dbReference type="PRINTS" id="PR00085">
    <property type="entry name" value="THFDHDRGNASE"/>
</dbReference>
<dbReference type="SUPFAM" id="SSF53223">
    <property type="entry name" value="Aminoacid dehydrogenase-like, N-terminal domain"/>
    <property type="match status" value="1"/>
</dbReference>
<dbReference type="SUPFAM" id="SSF51735">
    <property type="entry name" value="NAD(P)-binding Rossmann-fold domains"/>
    <property type="match status" value="1"/>
</dbReference>
<dbReference type="SUPFAM" id="SSF52540">
    <property type="entry name" value="P-loop containing nucleoside triphosphate hydrolases"/>
    <property type="match status" value="1"/>
</dbReference>
<dbReference type="PROSITE" id="PS00721">
    <property type="entry name" value="FTHFS_1"/>
    <property type="match status" value="1"/>
</dbReference>
<dbReference type="PROSITE" id="PS00722">
    <property type="entry name" value="FTHFS_2"/>
    <property type="match status" value="1"/>
</dbReference>
<dbReference type="PROSITE" id="PS00766">
    <property type="entry name" value="THF_DHG_CYH_1"/>
    <property type="match status" value="1"/>
</dbReference>
<dbReference type="PROSITE" id="PS00767">
    <property type="entry name" value="THF_DHG_CYH_2"/>
    <property type="match status" value="1"/>
</dbReference>
<evidence type="ECO:0000250" key="1"/>
<evidence type="ECO:0000250" key="2">
    <source>
        <dbReference type="UniProtKB" id="P11586"/>
    </source>
</evidence>
<evidence type="ECO:0000305" key="3"/>
<reference key="1">
    <citation type="submission" date="2004-11" db="EMBL/GenBank/DDBJ databases">
        <authorList>
            <consortium name="The German cDNA consortium"/>
        </authorList>
    </citation>
    <scope>NUCLEOTIDE SEQUENCE [LARGE SCALE MRNA]</scope>
    <source>
        <tissue>Kidney</tissue>
    </source>
</reference>
<comment type="function">
    <text evidence="2">Trifunctional enzyme that catalyzes the interconversion of three forms of one-carbon-substituted tetrahydrofolate: (6R)-5,10-methylene-5,6,7,8-tetrahydrofolate, 5,10-methenyltetrahydrofolate and (6S)-10-formyltetrahydrofolate. These derivatives of tetrahydrofolate are differentially required in nucleotide and amino acid biosynthesis, (6S)-10-formyltetrahydrofolate being required for purine biosynthesis while (6R)-5,10-methylene-5,6,7,8-tetrahydrofolate is used for serine and methionine biosynthesis for instance.</text>
</comment>
<comment type="catalytic activity">
    <reaction evidence="2">
        <text>(6R)-5,10-methylene-5,6,7,8-tetrahydrofolate + NADP(+) = (6R)-5,10-methenyltetrahydrofolate + NADPH</text>
        <dbReference type="Rhea" id="RHEA:22812"/>
        <dbReference type="ChEBI" id="CHEBI:15636"/>
        <dbReference type="ChEBI" id="CHEBI:57455"/>
        <dbReference type="ChEBI" id="CHEBI:57783"/>
        <dbReference type="ChEBI" id="CHEBI:58349"/>
        <dbReference type="EC" id="1.5.1.5"/>
    </reaction>
</comment>
<comment type="catalytic activity">
    <reaction evidence="2">
        <text>(6R)-5,10-methenyltetrahydrofolate + H2O = (6R)-10-formyltetrahydrofolate + H(+)</text>
        <dbReference type="Rhea" id="RHEA:23700"/>
        <dbReference type="ChEBI" id="CHEBI:15377"/>
        <dbReference type="ChEBI" id="CHEBI:15378"/>
        <dbReference type="ChEBI" id="CHEBI:57455"/>
        <dbReference type="ChEBI" id="CHEBI:195366"/>
        <dbReference type="EC" id="3.5.4.9"/>
    </reaction>
</comment>
<comment type="catalytic activity">
    <reaction evidence="2">
        <text>(6S)-5,6,7,8-tetrahydrofolate + formate + ATP = (6R)-10-formyltetrahydrofolate + ADP + phosphate</text>
        <dbReference type="Rhea" id="RHEA:20221"/>
        <dbReference type="ChEBI" id="CHEBI:15740"/>
        <dbReference type="ChEBI" id="CHEBI:30616"/>
        <dbReference type="ChEBI" id="CHEBI:43474"/>
        <dbReference type="ChEBI" id="CHEBI:57453"/>
        <dbReference type="ChEBI" id="CHEBI:195366"/>
        <dbReference type="ChEBI" id="CHEBI:456216"/>
        <dbReference type="EC" id="6.3.4.3"/>
    </reaction>
</comment>
<comment type="pathway">
    <text evidence="2">One-carbon metabolism; tetrahydrofolate interconversion.</text>
</comment>
<comment type="subunit">
    <text evidence="2">Homodimer.</text>
</comment>
<comment type="subcellular location">
    <subcellularLocation>
        <location evidence="2">Cytoplasm</location>
    </subcellularLocation>
</comment>
<comment type="domain">
    <text evidence="2">The N-terminal methylenetetrahydrofolate dehydrogenase and methenyltetrahydrofolate cyclohydrolase (D/C) domain carries both the methylenetetrahydrofolate dehydrogenase and methenyltetrahydrofolate cyclohydrolase activities.</text>
</comment>
<comment type="domain">
    <text evidence="2">The larger C-terminal formyltetrahydrofolate synthetase domain carries a third formyltetrahydrofolate synthetase activity.</text>
</comment>
<comment type="similarity">
    <text evidence="3">In the N-terminal section; belongs to the tetrahydrofolate dehydrogenase/cyclohydrolase family.</text>
</comment>
<comment type="similarity">
    <text evidence="3">In the C-terminal section; belongs to the formate--tetrahydrofolate ligase family.</text>
</comment>
<gene>
    <name type="primary">MTHFD1</name>
</gene>
<accession>Q5R8P0</accession>